<organism>
    <name type="scientific">Arabidopsis thaliana</name>
    <name type="common">Mouse-ear cress</name>
    <dbReference type="NCBI Taxonomy" id="3702"/>
    <lineage>
        <taxon>Eukaryota</taxon>
        <taxon>Viridiplantae</taxon>
        <taxon>Streptophyta</taxon>
        <taxon>Embryophyta</taxon>
        <taxon>Tracheophyta</taxon>
        <taxon>Spermatophyta</taxon>
        <taxon>Magnoliopsida</taxon>
        <taxon>eudicotyledons</taxon>
        <taxon>Gunneridae</taxon>
        <taxon>Pentapetalae</taxon>
        <taxon>rosids</taxon>
        <taxon>malvids</taxon>
        <taxon>Brassicales</taxon>
        <taxon>Brassicaceae</taxon>
        <taxon>Camelineae</taxon>
        <taxon>Arabidopsis</taxon>
    </lineage>
</organism>
<evidence type="ECO:0000255" key="1"/>
<evidence type="ECO:0000269" key="2">
    <source>
    </source>
</evidence>
<evidence type="ECO:0000269" key="3">
    <source>
    </source>
</evidence>
<evidence type="ECO:0000303" key="4">
    <source>
    </source>
</evidence>
<evidence type="ECO:0000305" key="5"/>
<evidence type="ECO:0000312" key="6">
    <source>
        <dbReference type="Araport" id="AT5G56170"/>
    </source>
</evidence>
<evidence type="ECO:0000312" key="7">
    <source>
        <dbReference type="EMBL" id="BAB09299.1"/>
    </source>
</evidence>
<evidence type="ECO:0007829" key="8">
    <source>
        <dbReference type="PDB" id="6A5D"/>
    </source>
</evidence>
<accession>Q9FKT1</accession>
<feature type="signal peptide" evidence="1">
    <location>
        <begin position="1"/>
        <end position="23"/>
    </location>
</feature>
<feature type="chain" id="PRO_5008179976" description="GPI-anchored protein LLG1">
    <location>
        <begin position="24"/>
        <end position="144"/>
    </location>
</feature>
<feature type="propeptide" id="PRO_0000438100" description="Removed in mature form" evidence="1">
    <location>
        <begin position="145"/>
        <end position="168"/>
    </location>
</feature>
<feature type="lipid moiety-binding region" description="GPI-anchor amidated asparagine" evidence="1">
    <location>
        <position position="144"/>
    </location>
</feature>
<feature type="glycosylation site" description="N-linked (GlcNAc...) asparagine" evidence="1">
    <location>
        <position position="57"/>
    </location>
</feature>
<feature type="helix" evidence="8">
    <location>
        <begin position="53"/>
        <end position="55"/>
    </location>
</feature>
<feature type="helix" evidence="8">
    <location>
        <begin position="59"/>
        <end position="62"/>
    </location>
</feature>
<feature type="strand" evidence="8">
    <location>
        <begin position="67"/>
        <end position="69"/>
    </location>
</feature>
<feature type="helix" evidence="8">
    <location>
        <begin position="72"/>
        <end position="83"/>
    </location>
</feature>
<feature type="helix" evidence="8">
    <location>
        <begin position="84"/>
        <end position="86"/>
    </location>
</feature>
<feature type="helix" evidence="8">
    <location>
        <begin position="87"/>
        <end position="90"/>
    </location>
</feature>
<feature type="helix" evidence="8">
    <location>
        <begin position="97"/>
        <end position="109"/>
    </location>
</feature>
<feature type="helix" evidence="8">
    <location>
        <begin position="115"/>
        <end position="122"/>
    </location>
</feature>
<feature type="turn" evidence="8">
    <location>
        <begin position="124"/>
        <end position="127"/>
    </location>
</feature>
<gene>
    <name evidence="4" type="primary">LLG1</name>
    <name evidence="6" type="ordered locus">At5g56170</name>
    <name evidence="7" type="ORF">MDA7.23</name>
</gene>
<keyword id="KW-0002">3D-structure</keyword>
<keyword id="KW-1003">Cell membrane</keyword>
<keyword id="KW-0325">Glycoprotein</keyword>
<keyword id="KW-0336">GPI-anchor</keyword>
<keyword id="KW-0449">Lipoprotein</keyword>
<keyword id="KW-0472">Membrane</keyword>
<keyword id="KW-1185">Reference proteome</keyword>
<keyword id="KW-0732">Signal</keyword>
<reference key="1">
    <citation type="journal article" date="1998" name="DNA Res.">
        <title>Structural analysis of Arabidopsis thaliana chromosome 5. V. Sequence features of the regions of 1,381,565 bp covered by twenty one physically assigned P1 and TAC clones.</title>
        <authorList>
            <person name="Kaneko T."/>
            <person name="Kotani H."/>
            <person name="Nakamura Y."/>
            <person name="Sato S."/>
            <person name="Asamizu E."/>
            <person name="Miyajima N."/>
            <person name="Tabata S."/>
        </authorList>
    </citation>
    <scope>NUCLEOTIDE SEQUENCE [LARGE SCALE GENOMIC DNA]</scope>
    <source>
        <strain>cv. Columbia</strain>
    </source>
</reference>
<reference key="2">
    <citation type="journal article" date="2017" name="Plant J.">
        <title>Araport11: a complete reannotation of the Arabidopsis thaliana reference genome.</title>
        <authorList>
            <person name="Cheng C.Y."/>
            <person name="Krishnakumar V."/>
            <person name="Chan A.P."/>
            <person name="Thibaud-Nissen F."/>
            <person name="Schobel S."/>
            <person name="Town C.D."/>
        </authorList>
    </citation>
    <scope>GENOME REANNOTATION</scope>
    <source>
        <strain>cv. Columbia</strain>
    </source>
</reference>
<reference key="3">
    <citation type="journal article" date="2003" name="Science">
        <title>Empirical analysis of transcriptional activity in the Arabidopsis genome.</title>
        <authorList>
            <person name="Yamada K."/>
            <person name="Lim J."/>
            <person name="Dale J.M."/>
            <person name="Chen H."/>
            <person name="Shinn P."/>
            <person name="Palm C.J."/>
            <person name="Southwick A.M."/>
            <person name="Wu H.C."/>
            <person name="Kim C.J."/>
            <person name="Nguyen M."/>
            <person name="Pham P.K."/>
            <person name="Cheuk R.F."/>
            <person name="Karlin-Newmann G."/>
            <person name="Liu S.X."/>
            <person name="Lam B."/>
            <person name="Sakano H."/>
            <person name="Wu T."/>
            <person name="Yu G."/>
            <person name="Miranda M."/>
            <person name="Quach H.L."/>
            <person name="Tripp M."/>
            <person name="Chang C.H."/>
            <person name="Lee J.M."/>
            <person name="Toriumi M.J."/>
            <person name="Chan M.M."/>
            <person name="Tang C.C."/>
            <person name="Onodera C.S."/>
            <person name="Deng J.M."/>
            <person name="Akiyama K."/>
            <person name="Ansari Y."/>
            <person name="Arakawa T."/>
            <person name="Banh J."/>
            <person name="Banno F."/>
            <person name="Bowser L."/>
            <person name="Brooks S.Y."/>
            <person name="Carninci P."/>
            <person name="Chao Q."/>
            <person name="Choy N."/>
            <person name="Enju A."/>
            <person name="Goldsmith A.D."/>
            <person name="Gurjal M."/>
            <person name="Hansen N.F."/>
            <person name="Hayashizaki Y."/>
            <person name="Johnson-Hopson C."/>
            <person name="Hsuan V.W."/>
            <person name="Iida K."/>
            <person name="Karnes M."/>
            <person name="Khan S."/>
            <person name="Koesema E."/>
            <person name="Ishida J."/>
            <person name="Jiang P.X."/>
            <person name="Jones T."/>
            <person name="Kawai J."/>
            <person name="Kamiya A."/>
            <person name="Meyers C."/>
            <person name="Nakajima M."/>
            <person name="Narusaka M."/>
            <person name="Seki M."/>
            <person name="Sakurai T."/>
            <person name="Satou M."/>
            <person name="Tamse R."/>
            <person name="Vaysberg M."/>
            <person name="Wallender E.K."/>
            <person name="Wong C."/>
            <person name="Yamamura Y."/>
            <person name="Yuan S."/>
            <person name="Shinozaki K."/>
            <person name="Davis R.W."/>
            <person name="Theologis A."/>
            <person name="Ecker J.R."/>
        </authorList>
    </citation>
    <scope>NUCLEOTIDE SEQUENCE [LARGE SCALE MRNA]</scope>
    <source>
        <strain>cv. Columbia</strain>
    </source>
</reference>
<reference key="4">
    <citation type="journal article" date="2010" name="Plant J.">
        <title>A role for LORELEI, a putative glycosylphosphatidylinositol-anchored protein, in Arabidopsis thaliana double fertilization and early seed development.</title>
        <authorList>
            <person name="Tsukamoto T."/>
            <person name="Qin Y."/>
            <person name="Huang Y."/>
            <person name="Dunatunga D."/>
            <person name="Palanivelu R."/>
        </authorList>
    </citation>
    <scope>TISSUE SPECIFICITY</scope>
    <scope>DISRUPTION PHENOTYPE</scope>
</reference>
<reference key="5">
    <citation type="journal article" date="2015" name="Elife">
        <title>Glycosylphosphatidylinositol-anchored proteins as chaperones and co-receptors for FERONIA receptor kinase signaling in Arabidopsis.</title>
        <authorList>
            <person name="Li C."/>
            <person name="Yeh F.L."/>
            <person name="Cheung A.Y."/>
            <person name="Duan Q."/>
            <person name="Kita D."/>
            <person name="Liu M.C."/>
            <person name="Maman J."/>
            <person name="Luu E.J."/>
            <person name="Wu B.W."/>
            <person name="Gates L."/>
            <person name="Jalal M."/>
            <person name="Kwong A."/>
            <person name="Carpenter H."/>
            <person name="Wu H.M."/>
        </authorList>
    </citation>
    <scope>FUNCTION</scope>
    <scope>INTERACTION WITH FER</scope>
    <scope>SUBCELLULAR LOCATION</scope>
    <scope>TISSUE SPECIFICITY</scope>
    <scope>DISRUPTION PHENOTYPE</scope>
</reference>
<sequence length="168" mass="18460">MELLSRALFFFLLLSVLSSFSSSSFISDGVFESQSLVLGRNLLQTKKTCPVNFEFMNYTIITSKCKGPKYPPKECCGAFKDFACPYTDQLNDLSSDCATTMFSYINLYGKYPPGLFANQCKEGKEGLECPAGSQLPPETSAEVNAATTSSSRLWLTVSAALLVFVKLF</sequence>
<proteinExistence type="evidence at protein level"/>
<name>LLG1_ARATH</name>
<protein>
    <recommendedName>
        <fullName evidence="5">GPI-anchored protein LLG1</fullName>
    </recommendedName>
    <alternativeName>
        <fullName evidence="4">LORELEI-like-GPI-anchored protein 1</fullName>
    </alternativeName>
</protein>
<dbReference type="EMBL" id="AB011476">
    <property type="protein sequence ID" value="BAB09299.1"/>
    <property type="molecule type" value="Genomic_DNA"/>
</dbReference>
<dbReference type="EMBL" id="CP002688">
    <property type="protein sequence ID" value="AED96729.1"/>
    <property type="molecule type" value="Genomic_DNA"/>
</dbReference>
<dbReference type="EMBL" id="BT000437">
    <property type="protein sequence ID" value="AAN17414.1"/>
    <property type="molecule type" value="mRNA"/>
</dbReference>
<dbReference type="EMBL" id="BT001157">
    <property type="protein sequence ID" value="AAN65044.1"/>
    <property type="molecule type" value="mRNA"/>
</dbReference>
<dbReference type="RefSeq" id="NP_200428.1">
    <property type="nucleotide sequence ID" value="NM_124999.5"/>
</dbReference>
<dbReference type="PDB" id="6A5D">
    <property type="method" value="X-ray"/>
    <property type="resolution" value="1.40 A"/>
    <property type="chains" value="A/B=24-159"/>
</dbReference>
<dbReference type="PDBsum" id="6A5D"/>
<dbReference type="SMR" id="Q9FKT1"/>
<dbReference type="FunCoup" id="Q9FKT1">
    <property type="interactions" value="1109"/>
</dbReference>
<dbReference type="STRING" id="3702.Q9FKT1"/>
<dbReference type="GlyCosmos" id="Q9FKT1">
    <property type="glycosylation" value="1 site, No reported glycans"/>
</dbReference>
<dbReference type="GlyGen" id="Q9FKT1">
    <property type="glycosylation" value="1 site"/>
</dbReference>
<dbReference type="PaxDb" id="3702-AT5G56170.1"/>
<dbReference type="ProteomicsDB" id="238460"/>
<dbReference type="EnsemblPlants" id="AT5G56170.1">
    <property type="protein sequence ID" value="AT5G56170.1"/>
    <property type="gene ID" value="AT5G56170"/>
</dbReference>
<dbReference type="GeneID" id="835716"/>
<dbReference type="Gramene" id="AT5G56170.1">
    <property type="protein sequence ID" value="AT5G56170.1"/>
    <property type="gene ID" value="AT5G56170"/>
</dbReference>
<dbReference type="KEGG" id="ath:AT5G56170"/>
<dbReference type="Araport" id="AT5G56170"/>
<dbReference type="TAIR" id="AT5G56170">
    <property type="gene designation" value="LLG1"/>
</dbReference>
<dbReference type="eggNOG" id="ENOG502S17V">
    <property type="taxonomic scope" value="Eukaryota"/>
</dbReference>
<dbReference type="HOGENOM" id="CLU_119747_0_0_1"/>
<dbReference type="InParanoid" id="Q9FKT1"/>
<dbReference type="OMA" id="ACPYAND"/>
<dbReference type="PhylomeDB" id="Q9FKT1"/>
<dbReference type="PRO" id="PR:Q9FKT1"/>
<dbReference type="Proteomes" id="UP000006548">
    <property type="component" value="Chromosome 5"/>
</dbReference>
<dbReference type="ExpressionAtlas" id="Q9FKT1">
    <property type="expression patterns" value="baseline and differential"/>
</dbReference>
<dbReference type="GO" id="GO:0005886">
    <property type="term" value="C:plasma membrane"/>
    <property type="evidence" value="ECO:0000314"/>
    <property type="project" value="UniProtKB"/>
</dbReference>
<dbReference type="GO" id="GO:0009536">
    <property type="term" value="C:plastid"/>
    <property type="evidence" value="ECO:0007005"/>
    <property type="project" value="TAIR"/>
</dbReference>
<dbReference type="GO" id="GO:0090406">
    <property type="term" value="C:pollen tube"/>
    <property type="evidence" value="ECO:0000314"/>
    <property type="project" value="TAIR"/>
</dbReference>
<dbReference type="GO" id="GO:0098552">
    <property type="term" value="C:side of membrane"/>
    <property type="evidence" value="ECO:0007669"/>
    <property type="project" value="UniProtKB-KW"/>
</dbReference>
<dbReference type="GO" id="GO:0045927">
    <property type="term" value="P:positive regulation of growth"/>
    <property type="evidence" value="ECO:0000315"/>
    <property type="project" value="UniProtKB"/>
</dbReference>
<dbReference type="InterPro" id="IPR039307">
    <property type="entry name" value="LORELEI-like"/>
</dbReference>
<dbReference type="PANTHER" id="PTHR31533:SF2">
    <property type="entry name" value="GPI-ANCHORED PROTEIN LLG1"/>
    <property type="match status" value="1"/>
</dbReference>
<dbReference type="PANTHER" id="PTHR31533">
    <property type="entry name" value="GPI-ANCHORED PROTEIN LLG1-RELATED-RELATED"/>
    <property type="match status" value="1"/>
</dbReference>
<comment type="function">
    <text evidence="3">Component of the FER-regulated Rho GTPase signaling complex. Acts as a chaperone and coreceptor for FER. Required for localization of FER to the plasma membrane.</text>
</comment>
<comment type="subunit">
    <text evidence="3">Interacts with FER.</text>
</comment>
<comment type="subcellular location">
    <subcellularLocation>
        <location evidence="3">Cell membrane</location>
        <topology evidence="1 3">Lipid-anchor</topology>
        <topology evidence="1 3">GPI-anchor</topology>
    </subcellularLocation>
</comment>
<comment type="tissue specificity">
    <text evidence="2">Expressed in pollen, pollen tubes, sporophytic pistil tissues, in the early stages of female gametophyte development, and in unfertilized, mature ovules (PubMed:20163554). Expressed in roots, lateral roots, shoots, cotyledons, petioles, developing leaves and anther filaments.</text>
</comment>
<comment type="disruption phenotype">
    <text evidence="2 3">Retarded growth, collapsed root hairs, defective trichomes, abnormal accumulation of high levels of anthocyanin and overall reduced plant size (PubMed:26052747). No aborted seed phenotype and normal production of seed sets (PubMed:20163554, PubMed:26052747).</text>
</comment>